<protein>
    <recommendedName>
        <fullName>Cysteine protease StiP</fullName>
        <ecNumber>3.4.22.-</ecNumber>
    </recommendedName>
</protein>
<accession>Q6FAX7</accession>
<reference key="1">
    <citation type="journal article" date="2004" name="Nucleic Acids Res.">
        <title>Unique features revealed by the genome sequence of Acinetobacter sp. ADP1, a versatile and naturally transformation competent bacterium.</title>
        <authorList>
            <person name="Barbe V."/>
            <person name="Vallenet D."/>
            <person name="Fonknechten N."/>
            <person name="Kreimeyer A."/>
            <person name="Oztas S."/>
            <person name="Labarre L."/>
            <person name="Cruveiller S."/>
            <person name="Robert C."/>
            <person name="Duprat S."/>
            <person name="Wincker P."/>
            <person name="Ornston L.N."/>
            <person name="Weissenbach J."/>
            <person name="Marliere P."/>
            <person name="Cohen G.N."/>
            <person name="Medigue C."/>
        </authorList>
    </citation>
    <scope>NUCLEOTIDE SEQUENCE [LARGE SCALE GENOMIC DNA]</scope>
    <source>
        <strain>ATCC 33305 / BD413 / ADP1</strain>
    </source>
</reference>
<reference key="2">
    <citation type="journal article" date="2010" name="Appl. Environ. Microbiol.">
        <title>Acinetobacter baylyi starvation-induced genes identified through incubation in long-term stationary phase.</title>
        <authorList>
            <person name="Lostroh C.P."/>
            <person name="Voyles B.A."/>
        </authorList>
    </citation>
    <scope>INDUCTION</scope>
    <source>
        <strain>ATCC 33305 / BD413 / ADP1</strain>
    </source>
</reference>
<reference key="3">
    <citation type="journal article" date="2013" name="Can. J. Microbiol.">
        <title>Acinetobacter baylyi long-term stationary-phase protein StiP is a protease required for normal cell morphology and resistance to tellurite.</title>
        <authorList>
            <person name="Reichert B."/>
            <person name="Dornbusch A.J."/>
            <person name="Arguello J."/>
            <person name="Stanley S.E."/>
            <person name="Lang K.M."/>
            <person name="Lostroh C.P."/>
            <person name="Daugherty M.A."/>
        </authorList>
    </citation>
    <scope>FUNCTION AS A CYSTEINE PROTEASE</scope>
    <scope>GENE NAME</scope>
    <scope>ACTIVITY REGULATION</scope>
    <scope>AUTOCATALYTIC CLEAVAGE</scope>
    <scope>DISRUPTION PHENOTYPE</scope>
    <source>
        <strain>ATCC 33305 / BD413 / ADP1</strain>
    </source>
</reference>
<organism>
    <name type="scientific">Acinetobacter baylyi (strain ATCC 33305 / BD413 / ADP1)</name>
    <dbReference type="NCBI Taxonomy" id="62977"/>
    <lineage>
        <taxon>Bacteria</taxon>
        <taxon>Pseudomonadati</taxon>
        <taxon>Pseudomonadota</taxon>
        <taxon>Gammaproteobacteria</taxon>
        <taxon>Moraxellales</taxon>
        <taxon>Moraxellaceae</taxon>
        <taxon>Acinetobacter</taxon>
    </lineage>
</organism>
<feature type="propeptide" id="PRO_0000425149" evidence="1">
    <location>
        <begin position="1"/>
        <end status="unknown"/>
    </location>
</feature>
<feature type="chain" id="PRO_0000425150" description="Cysteine protease StiP">
    <location>
        <begin status="unknown"/>
        <end position="383"/>
    </location>
</feature>
<name>STIP_ACIAD</name>
<evidence type="ECO:0000255" key="1"/>
<evidence type="ECO:0000269" key="2">
    <source>
    </source>
</evidence>
<evidence type="ECO:0000269" key="3">
    <source>
    </source>
</evidence>
<evidence type="ECO:0000305" key="4"/>
<sequence length="383" mass="42995">MAIINKDKATELILKQGFSGSYQSEQVTFLLKRTHIEPTDTAEKERLIQSGEKHYSQMISLENAPTARHLELFEQAMQQGQQRLAQEVQQLAQTLVVEFNEPIVLVSFVRAGVPLGVLLYHAIQDLGRDCVHYGISIIRDRGIDFAALETIIARHGHASIVFVDGWTGKGAIRQELQRSLGNDTRFIGKPLPLVVLSDIAGCAWLAASGDDWLIPSGILGSTISGLISRSICEGETLSADEITAENIDQWHRCIEYHHLKEFDISQQFIQRINQIRLKLNPQSNAVWAETQQQAQQDQSQQVVHKLAQEYDIQNINRIKPSIAEATRAILRRVPDLVLLRDADDEDTRLLRHLTQITKTPVQVVGDQIAPYRAITLIQKLGKG</sequence>
<comment type="function">
    <text evidence="3">Cysteine protease that may play a role in regulating cell morphology in response to stressful conditions which likely cause oxidative damage. Appears to catalyze its own cleavage, which probably leads to its activation.</text>
</comment>
<comment type="activity regulation">
    <text evidence="3">Is inhibited by bromopyruvate in vitro. Activity is not affected by the presence of tellurite.</text>
</comment>
<comment type="induction">
    <text evidence="2">Highly induced by starvation during long-term stationary phase, while shows very low expression during exponential growth.</text>
</comment>
<comment type="PTM">
    <text>Is probably processed via an autocatalytic removal of a proregion of about 100 amino acids.</text>
</comment>
<comment type="disruption phenotype">
    <text evidence="3">Deletion of this gene causes hypersensitivity to tellurite, altered population dynamics during long term batch culture, and, most strikingly, dramatic alteration of normal cell morphology.</text>
</comment>
<comment type="similarity">
    <text evidence="4">Belongs to the cysteine protease StiP family.</text>
</comment>
<proteinExistence type="evidence at protein level"/>
<dbReference type="EC" id="3.4.22.-"/>
<dbReference type="EMBL" id="CR543861">
    <property type="protein sequence ID" value="CAG68786.1"/>
    <property type="molecule type" value="Genomic_DNA"/>
</dbReference>
<dbReference type="RefSeq" id="WP_004927249.1">
    <property type="nucleotide sequence ID" value="NC_005966.1"/>
</dbReference>
<dbReference type="STRING" id="202950.GCA_001485005_00408"/>
<dbReference type="GeneID" id="45234323"/>
<dbReference type="KEGG" id="aci:ACIAD1960"/>
<dbReference type="eggNOG" id="COG1358">
    <property type="taxonomic scope" value="Bacteria"/>
</dbReference>
<dbReference type="HOGENOM" id="CLU_032640_1_0_6"/>
<dbReference type="OrthoDB" id="1663315at2"/>
<dbReference type="BioCyc" id="ASP62977:ACIAD_RS09020-MONOMER"/>
<dbReference type="Proteomes" id="UP000000430">
    <property type="component" value="Chromosome"/>
</dbReference>
<dbReference type="GO" id="GO:0008234">
    <property type="term" value="F:cysteine-type peptidase activity"/>
    <property type="evidence" value="ECO:0000314"/>
    <property type="project" value="UniProtKB"/>
</dbReference>
<dbReference type="GO" id="GO:0000902">
    <property type="term" value="P:cell morphogenesis"/>
    <property type="evidence" value="ECO:0000315"/>
    <property type="project" value="UniProtKB"/>
</dbReference>
<dbReference type="GO" id="GO:0016540">
    <property type="term" value="P:protein autoprocessing"/>
    <property type="evidence" value="ECO:0000314"/>
    <property type="project" value="UniProtKB"/>
</dbReference>
<dbReference type="InterPro" id="IPR028157">
    <property type="entry name" value="PELOTA_dom"/>
</dbReference>
<dbReference type="InterPro" id="IPR048336">
    <property type="entry name" value="StiP-like"/>
</dbReference>
<dbReference type="InterPro" id="IPR011215">
    <property type="entry name" value="StiP_N"/>
</dbReference>
<dbReference type="Pfam" id="PF15608">
    <property type="entry name" value="PELOTA_1"/>
    <property type="match status" value="1"/>
</dbReference>
<dbReference type="Pfam" id="PF11202">
    <property type="entry name" value="StiP"/>
    <property type="match status" value="1"/>
</dbReference>
<dbReference type="PIRSF" id="PIRSF020979">
    <property type="entry name" value="UCP020979"/>
    <property type="match status" value="1"/>
</dbReference>
<keyword id="KW-0068">Autocatalytic cleavage</keyword>
<keyword id="KW-0378">Hydrolase</keyword>
<keyword id="KW-0645">Protease</keyword>
<keyword id="KW-0788">Thiol protease</keyword>
<gene>
    <name type="primary">stiP</name>
    <name type="ordered locus">ACIAD1960</name>
</gene>